<dbReference type="EMBL" id="X75891">
    <property type="protein sequence ID" value="CAA53491.1"/>
    <property type="molecule type" value="Genomic_DNA"/>
</dbReference>
<dbReference type="EMBL" id="Z36001">
    <property type="protein sequence ID" value="CAA85089.1"/>
    <property type="molecule type" value="Genomic_DNA"/>
</dbReference>
<dbReference type="EMBL" id="BK006936">
    <property type="protein sequence ID" value="DAA07249.1"/>
    <property type="molecule type" value="Genomic_DNA"/>
</dbReference>
<dbReference type="PIR" id="S46001">
    <property type="entry name" value="S46001"/>
</dbReference>
<dbReference type="RefSeq" id="NP_009690.1">
    <property type="nucleotide sequence ID" value="NM_001178480.1"/>
</dbReference>
<dbReference type="SMR" id="P38090"/>
<dbReference type="BioGRID" id="32833">
    <property type="interactions" value="120"/>
</dbReference>
<dbReference type="DIP" id="DIP-8141N"/>
<dbReference type="FunCoup" id="P38090">
    <property type="interactions" value="208"/>
</dbReference>
<dbReference type="IntAct" id="P38090">
    <property type="interactions" value="8"/>
</dbReference>
<dbReference type="MINT" id="P38090"/>
<dbReference type="STRING" id="4932.YBR132C"/>
<dbReference type="TCDB" id="2.A.3.10.19">
    <property type="family name" value="the amino acid-polyamine-organocation (apc) family"/>
</dbReference>
<dbReference type="iPTMnet" id="P38090"/>
<dbReference type="PaxDb" id="4932-YBR132C"/>
<dbReference type="PeptideAtlas" id="P38090"/>
<dbReference type="EnsemblFungi" id="YBR132C_mRNA">
    <property type="protein sequence ID" value="YBR132C"/>
    <property type="gene ID" value="YBR132C"/>
</dbReference>
<dbReference type="GeneID" id="852429"/>
<dbReference type="KEGG" id="sce:YBR132C"/>
<dbReference type="AGR" id="SGD:S000000336"/>
<dbReference type="SGD" id="S000000336">
    <property type="gene designation" value="AGP2"/>
</dbReference>
<dbReference type="VEuPathDB" id="FungiDB:YBR132C"/>
<dbReference type="eggNOG" id="KOG1286">
    <property type="taxonomic scope" value="Eukaryota"/>
</dbReference>
<dbReference type="HOGENOM" id="CLU_007946_12_1_1"/>
<dbReference type="InParanoid" id="P38090"/>
<dbReference type="OMA" id="NTIIHYW"/>
<dbReference type="OrthoDB" id="10062876at2759"/>
<dbReference type="BioCyc" id="YEAST:G3O-29087-MONOMER"/>
<dbReference type="SABIO-RK" id="P38090"/>
<dbReference type="BioGRID-ORCS" id="852429">
    <property type="hits" value="9 hits in 10 CRISPR screens"/>
</dbReference>
<dbReference type="PRO" id="PR:P38090"/>
<dbReference type="Proteomes" id="UP000002311">
    <property type="component" value="Chromosome II"/>
</dbReference>
<dbReference type="RNAct" id="P38090">
    <property type="molecule type" value="protein"/>
</dbReference>
<dbReference type="GO" id="GO:0005783">
    <property type="term" value="C:endoplasmic reticulum"/>
    <property type="evidence" value="ECO:0007005"/>
    <property type="project" value="SGD"/>
</dbReference>
<dbReference type="GO" id="GO:0005789">
    <property type="term" value="C:endoplasmic reticulum membrane"/>
    <property type="evidence" value="ECO:0000314"/>
    <property type="project" value="SGD"/>
</dbReference>
<dbReference type="GO" id="GO:0000329">
    <property type="term" value="C:fungal-type vacuole membrane"/>
    <property type="evidence" value="ECO:0000314"/>
    <property type="project" value="SGD"/>
</dbReference>
<dbReference type="GO" id="GO:0016020">
    <property type="term" value="C:membrane"/>
    <property type="evidence" value="ECO:0000318"/>
    <property type="project" value="GO_Central"/>
</dbReference>
<dbReference type="GO" id="GO:0005886">
    <property type="term" value="C:plasma membrane"/>
    <property type="evidence" value="ECO:0000314"/>
    <property type="project" value="SGD"/>
</dbReference>
<dbReference type="GO" id="GO:0015171">
    <property type="term" value="F:amino acid transmembrane transporter activity"/>
    <property type="evidence" value="ECO:0000318"/>
    <property type="project" value="GO_Central"/>
</dbReference>
<dbReference type="GO" id="GO:0003333">
    <property type="term" value="P:amino acid transmembrane transport"/>
    <property type="evidence" value="ECO:0000318"/>
    <property type="project" value="GO_Central"/>
</dbReference>
<dbReference type="GO" id="GO:1902274">
    <property type="term" value="P:positive regulation of (R)-carnitine transmembrane transport"/>
    <property type="evidence" value="ECO:0000315"/>
    <property type="project" value="SGD"/>
</dbReference>
<dbReference type="GO" id="GO:1902269">
    <property type="term" value="P:positive regulation of polyamine transmembrane transport"/>
    <property type="evidence" value="ECO:0000315"/>
    <property type="project" value="SGD"/>
</dbReference>
<dbReference type="FunFam" id="1.20.1740.10:FF:000006">
    <property type="entry name" value="General amino acid permease"/>
    <property type="match status" value="1"/>
</dbReference>
<dbReference type="Gene3D" id="1.20.1740.10">
    <property type="entry name" value="Amino acid/polyamine transporter I"/>
    <property type="match status" value="1"/>
</dbReference>
<dbReference type="InterPro" id="IPR004841">
    <property type="entry name" value="AA-permease/SLC12A_dom"/>
</dbReference>
<dbReference type="InterPro" id="IPR004840">
    <property type="entry name" value="Amino_acid_permease_CS"/>
</dbReference>
<dbReference type="InterPro" id="IPR050524">
    <property type="entry name" value="APC_YAT"/>
</dbReference>
<dbReference type="PANTHER" id="PTHR43341">
    <property type="entry name" value="AMINO ACID PERMEASE"/>
    <property type="match status" value="1"/>
</dbReference>
<dbReference type="PANTHER" id="PTHR43341:SF15">
    <property type="entry name" value="GENERAL AMINO ACID PERMEASE AGP2"/>
    <property type="match status" value="1"/>
</dbReference>
<dbReference type="Pfam" id="PF00324">
    <property type="entry name" value="AA_permease"/>
    <property type="match status" value="1"/>
</dbReference>
<dbReference type="PIRSF" id="PIRSF006060">
    <property type="entry name" value="AA_transporter"/>
    <property type="match status" value="1"/>
</dbReference>
<dbReference type="PROSITE" id="PS00218">
    <property type="entry name" value="AMINO_ACID_PERMEASE_1"/>
    <property type="match status" value="1"/>
</dbReference>
<proteinExistence type="evidence at protein level"/>
<gene>
    <name type="primary">AGP2</name>
    <name type="ordered locus">YBR132C</name>
    <name type="ORF">YBR1007</name>
</gene>
<protein>
    <recommendedName>
        <fullName>General amino acid permease AGP2</fullName>
    </recommendedName>
</protein>
<comment type="function">
    <text evidence="2 3">General amino acid permease with broad substrate specificity. Can also transport carnitine.</text>
</comment>
<comment type="interaction">
    <interactant intactId="EBI-2362">
        <id>P38090</id>
    </interactant>
    <interactant intactId="EBI-22980">
        <id>P43603</id>
        <label>LSB3</label>
    </interactant>
    <organismsDiffer>false</organismsDiffer>
    <experiments>2</experiments>
</comment>
<comment type="interaction">
    <interactant intactId="EBI-2362">
        <id>P38090</id>
    </interactant>
    <interactant intactId="EBI-24460">
        <id>P32793</id>
        <label>YSC84</label>
    </interactant>
    <organismsDiffer>false</organismsDiffer>
    <experiments>2</experiments>
</comment>
<comment type="subcellular location">
    <subcellularLocation>
        <location>Membrane</location>
        <topology>Multi-pass membrane protein</topology>
    </subcellularLocation>
</comment>
<comment type="similarity">
    <text evidence="4">Belongs to the amino acid-polyamine-organocation (APC) superfamily. YAT (TC 2.A.3.10) family.</text>
</comment>
<feature type="chain" id="PRO_0000054143" description="General amino acid permease AGP2">
    <location>
        <begin position="1"/>
        <end position="596"/>
    </location>
</feature>
<feature type="topological domain" description="Cytoplasmic" evidence="1">
    <location>
        <begin position="1"/>
        <end position="94"/>
    </location>
</feature>
<feature type="transmembrane region" description="Helical" evidence="1">
    <location>
        <begin position="95"/>
        <end position="115"/>
    </location>
</feature>
<feature type="topological domain" description="Extracellular" evidence="1">
    <location>
        <begin position="116"/>
        <end position="117"/>
    </location>
</feature>
<feature type="transmembrane region" description="Helical" evidence="1">
    <location>
        <begin position="118"/>
        <end position="138"/>
    </location>
</feature>
<feature type="topological domain" description="Cytoplasmic" evidence="1">
    <location>
        <begin position="139"/>
        <end position="165"/>
    </location>
</feature>
<feature type="transmembrane region" description="Helical" evidence="1">
    <location>
        <begin position="166"/>
        <end position="186"/>
    </location>
</feature>
<feature type="topological domain" description="Extracellular" evidence="1">
    <location>
        <begin position="187"/>
        <end position="199"/>
    </location>
</feature>
<feature type="transmembrane region" description="Helical" evidence="1">
    <location>
        <begin position="200"/>
        <end position="220"/>
    </location>
</feature>
<feature type="topological domain" description="Cytoplasmic" evidence="1">
    <location>
        <begin position="221"/>
        <end position="227"/>
    </location>
</feature>
<feature type="transmembrane region" description="Helical" evidence="1">
    <location>
        <begin position="228"/>
        <end position="248"/>
    </location>
</feature>
<feature type="topological domain" description="Extracellular" evidence="1">
    <location>
        <begin position="249"/>
        <end position="288"/>
    </location>
</feature>
<feature type="transmembrane region" description="Helical" evidence="1">
    <location>
        <begin position="289"/>
        <end position="309"/>
    </location>
</feature>
<feature type="topological domain" description="Cytoplasmic" evidence="1">
    <location>
        <begin position="310"/>
        <end position="326"/>
    </location>
</feature>
<feature type="transmembrane region" description="Helical" evidence="1">
    <location>
        <begin position="327"/>
        <end position="347"/>
    </location>
</feature>
<feature type="topological domain" description="Extracellular" evidence="1">
    <location>
        <begin position="348"/>
        <end position="379"/>
    </location>
</feature>
<feature type="transmembrane region" description="Helical" evidence="1">
    <location>
        <begin position="380"/>
        <end position="400"/>
    </location>
</feature>
<feature type="topological domain" description="Cytoplasmic" evidence="1">
    <location>
        <begin position="401"/>
        <end position="427"/>
    </location>
</feature>
<feature type="transmembrane region" description="Helical" evidence="1">
    <location>
        <begin position="428"/>
        <end position="448"/>
    </location>
</feature>
<feature type="topological domain" description="Extracellular" evidence="1">
    <location>
        <begin position="449"/>
        <end position="459"/>
    </location>
</feature>
<feature type="transmembrane region" description="Helical" evidence="1">
    <location>
        <begin position="460"/>
        <end position="480"/>
    </location>
</feature>
<feature type="topological domain" description="Cytoplasmic" evidence="1">
    <location>
        <begin position="481"/>
        <end position="505"/>
    </location>
</feature>
<feature type="transmembrane region" description="Helical" evidence="1">
    <location>
        <begin position="506"/>
        <end position="526"/>
    </location>
</feature>
<feature type="topological domain" description="Extracellular" evidence="1">
    <location>
        <begin position="527"/>
        <end position="534"/>
    </location>
</feature>
<feature type="transmembrane region" description="Helical" evidence="1">
    <location>
        <begin position="535"/>
        <end position="555"/>
    </location>
</feature>
<feature type="topological domain" description="Cytoplasmic" evidence="1">
    <location>
        <begin position="556"/>
        <end position="596"/>
    </location>
</feature>
<name>AGP2_YEAST</name>
<reference key="1">
    <citation type="journal article" date="1994" name="Yeast">
        <title>The sequence of 29.7 kb from the right arm of chromosome II reveals 13 complete open reading frames, of which ten correspond to new genes.</title>
        <authorList>
            <person name="Becam A.-M."/>
            <person name="Cullin C."/>
            <person name="Grzybowska E."/>
            <person name="Lacroute F."/>
            <person name="Nasr F."/>
            <person name="Ozier-Kalogeropoulos O."/>
            <person name="Palucha A."/>
            <person name="Slonimski P.P."/>
            <person name="Zagulski M."/>
            <person name="Herbert C.J."/>
        </authorList>
    </citation>
    <scope>NUCLEOTIDE SEQUENCE [GENOMIC DNA]</scope>
    <source>
        <strain>ATCC 204508 / S288c</strain>
    </source>
</reference>
<reference key="2">
    <citation type="journal article" date="1994" name="EMBO J.">
        <title>Complete DNA sequence of yeast chromosome II.</title>
        <authorList>
            <person name="Feldmann H."/>
            <person name="Aigle M."/>
            <person name="Aljinovic G."/>
            <person name="Andre B."/>
            <person name="Baclet M.C."/>
            <person name="Barthe C."/>
            <person name="Baur A."/>
            <person name="Becam A.-M."/>
            <person name="Biteau N."/>
            <person name="Boles E."/>
            <person name="Brandt T."/>
            <person name="Brendel M."/>
            <person name="Brueckner M."/>
            <person name="Bussereau F."/>
            <person name="Christiansen C."/>
            <person name="Contreras R."/>
            <person name="Crouzet M."/>
            <person name="Cziepluch C."/>
            <person name="Demolis N."/>
            <person name="Delaveau T."/>
            <person name="Doignon F."/>
            <person name="Domdey H."/>
            <person name="Duesterhus S."/>
            <person name="Dubois E."/>
            <person name="Dujon B."/>
            <person name="El Bakkoury M."/>
            <person name="Entian K.-D."/>
            <person name="Feuermann M."/>
            <person name="Fiers W."/>
            <person name="Fobo G.M."/>
            <person name="Fritz C."/>
            <person name="Gassenhuber J."/>
            <person name="Glansdorff N."/>
            <person name="Goffeau A."/>
            <person name="Grivell L.A."/>
            <person name="de Haan M."/>
            <person name="Hein C."/>
            <person name="Herbert C.J."/>
            <person name="Hollenberg C.P."/>
            <person name="Holmstroem K."/>
            <person name="Jacq C."/>
            <person name="Jacquet M."/>
            <person name="Jauniaux J.-C."/>
            <person name="Jonniaux J.-L."/>
            <person name="Kallesoee T."/>
            <person name="Kiesau P."/>
            <person name="Kirchrath L."/>
            <person name="Koetter P."/>
            <person name="Korol S."/>
            <person name="Liebl S."/>
            <person name="Logghe M."/>
            <person name="Lohan A.J.E."/>
            <person name="Louis E.J."/>
            <person name="Li Z.Y."/>
            <person name="Maat M.J."/>
            <person name="Mallet L."/>
            <person name="Mannhaupt G."/>
            <person name="Messenguy F."/>
            <person name="Miosga T."/>
            <person name="Molemans F."/>
            <person name="Mueller S."/>
            <person name="Nasr F."/>
            <person name="Obermaier B."/>
            <person name="Perea J."/>
            <person name="Pierard A."/>
            <person name="Piravandi E."/>
            <person name="Pohl F.M."/>
            <person name="Pohl T.M."/>
            <person name="Potier S."/>
            <person name="Proft M."/>
            <person name="Purnelle B."/>
            <person name="Ramezani Rad M."/>
            <person name="Rieger M."/>
            <person name="Rose M."/>
            <person name="Schaaff-Gerstenschlaeger I."/>
            <person name="Scherens B."/>
            <person name="Schwarzlose C."/>
            <person name="Skala J."/>
            <person name="Slonimski P.P."/>
            <person name="Smits P.H.M."/>
            <person name="Souciet J.-L."/>
            <person name="Steensma H.Y."/>
            <person name="Stucka R."/>
            <person name="Urrestarazu L.A."/>
            <person name="van der Aart Q.J.M."/>
            <person name="Van Dyck L."/>
            <person name="Vassarotti A."/>
            <person name="Vetter I."/>
            <person name="Vierendeels F."/>
            <person name="Vissers S."/>
            <person name="Wagner G."/>
            <person name="de Wergifosse P."/>
            <person name="Wolfe K.H."/>
            <person name="Zagulski M."/>
            <person name="Zimmermann F.K."/>
            <person name="Mewes H.-W."/>
            <person name="Kleine K."/>
        </authorList>
    </citation>
    <scope>NUCLEOTIDE SEQUENCE [LARGE SCALE GENOMIC DNA]</scope>
    <source>
        <strain>ATCC 204508 / S288c</strain>
    </source>
</reference>
<reference key="3">
    <citation type="journal article" date="2014" name="G3 (Bethesda)">
        <title>The reference genome sequence of Saccharomyces cerevisiae: Then and now.</title>
        <authorList>
            <person name="Engel S.R."/>
            <person name="Dietrich F.S."/>
            <person name="Fisk D.G."/>
            <person name="Binkley G."/>
            <person name="Balakrishnan R."/>
            <person name="Costanzo M.C."/>
            <person name="Dwight S.S."/>
            <person name="Hitz B.C."/>
            <person name="Karra K."/>
            <person name="Nash R.S."/>
            <person name="Weng S."/>
            <person name="Wong E.D."/>
            <person name="Lloyd P."/>
            <person name="Skrzypek M.S."/>
            <person name="Miyasato S.R."/>
            <person name="Simison M."/>
            <person name="Cherry J.M."/>
        </authorList>
    </citation>
    <scope>GENOME REANNOTATION</scope>
    <source>
        <strain>ATCC 204508 / S288c</strain>
    </source>
</reference>
<reference key="4">
    <citation type="journal article" date="1994" name="Curr. Genet.">
        <title>An analysis of the sequence of part of the right arm of chromosome II of S. cerevisiae reveals new genes encoding an amino-acid permease and a carboxypeptidase.</title>
        <authorList>
            <person name="Nasr F."/>
            <person name="Becam A.-M."/>
            <person name="Grzybowska E."/>
            <person name="Zagulski M."/>
            <person name="Slonimski P.P."/>
            <person name="Herbert C.J."/>
        </authorList>
    </citation>
    <scope>DISCUSSION OF SEQUENCE</scope>
</reference>
<reference key="5">
    <citation type="unpublished observations" date="1997-07">
        <authorList>
            <person name="Garrett J.M."/>
            <person name="Schreve J.L."/>
        </authorList>
    </citation>
    <scope>CHARACTERIZATION</scope>
</reference>
<reference key="6">
    <citation type="journal article" date="1999" name="EMBO J.">
        <title>Molecular characterization of carnitine-dependent transport of acetyl-CoA from peroxisomes to mitochondria in Saccharomyces cerevisiae and identification of a plasma membrane carnitine transporter, Agp2p.</title>
        <authorList>
            <person name="van Roermund C.W."/>
            <person name="Hettema E.H."/>
            <person name="van den Berg M."/>
            <person name="Tabak H.F."/>
            <person name="Wanders R.J."/>
        </authorList>
    </citation>
    <scope>FUNCTION IN CARNITINE TRANSPORT</scope>
</reference>
<reference key="7">
    <citation type="journal article" date="2002" name="Mol. Cells">
        <title>Carnitine uptake by AGP2 in yeast Saccharomyces cerevisiae is dependent on Hog1 MAP kinase pathway.</title>
        <authorList>
            <person name="Lee J."/>
            <person name="Lee B."/>
            <person name="Shin D."/>
            <person name="Kwak S.S."/>
            <person name="Bahk J.D."/>
            <person name="Lim C.O."/>
            <person name="Yun D.J."/>
        </authorList>
    </citation>
    <scope>FUNCTION IN CARNITINE TRANSPORT</scope>
</reference>
<reference key="8">
    <citation type="journal article" date="2006" name="Proc. Natl. Acad. Sci. U.S.A.">
        <title>A global topology map of the Saccharomyces cerevisiae membrane proteome.</title>
        <authorList>
            <person name="Kim H."/>
            <person name="Melen K."/>
            <person name="Oesterberg M."/>
            <person name="von Heijne G."/>
        </authorList>
    </citation>
    <scope>TOPOLOGY [LARGE SCALE ANALYSIS]</scope>
    <source>
        <strain>ATCC 208353 / W303-1A</strain>
    </source>
</reference>
<reference key="9">
    <citation type="journal article" date="2009" name="Science">
        <title>Global analysis of Cdk1 substrate phosphorylation sites provides insights into evolution.</title>
        <authorList>
            <person name="Holt L.J."/>
            <person name="Tuch B.B."/>
            <person name="Villen J."/>
            <person name="Johnson A.D."/>
            <person name="Gygi S.P."/>
            <person name="Morgan D.O."/>
        </authorList>
    </citation>
    <scope>IDENTIFICATION BY MASS SPECTROMETRY [LARGE SCALE ANALYSIS]</scope>
</reference>
<evidence type="ECO:0000255" key="1"/>
<evidence type="ECO:0000269" key="2">
    <source>
    </source>
</evidence>
<evidence type="ECO:0000269" key="3">
    <source>
    </source>
</evidence>
<evidence type="ECO:0000305" key="4"/>
<organism>
    <name type="scientific">Saccharomyces cerevisiae (strain ATCC 204508 / S288c)</name>
    <name type="common">Baker's yeast</name>
    <dbReference type="NCBI Taxonomy" id="559292"/>
    <lineage>
        <taxon>Eukaryota</taxon>
        <taxon>Fungi</taxon>
        <taxon>Dikarya</taxon>
        <taxon>Ascomycota</taxon>
        <taxon>Saccharomycotina</taxon>
        <taxon>Saccharomycetes</taxon>
        <taxon>Saccharomycetales</taxon>
        <taxon>Saccharomycetaceae</taxon>
        <taxon>Saccharomyces</taxon>
    </lineage>
</organism>
<accession>P38090</accession>
<accession>D6VQC9</accession>
<keyword id="KW-0029">Amino-acid transport</keyword>
<keyword id="KW-0472">Membrane</keyword>
<keyword id="KW-1185">Reference proteome</keyword>
<keyword id="KW-0812">Transmembrane</keyword>
<keyword id="KW-1133">Transmembrane helix</keyword>
<keyword id="KW-0813">Transport</keyword>
<sequence length="596" mass="67262">MTKERMTIDYENDGDFEYDKNKYKTITTRIKSIEPSEGWLEPSGSVGHINTIPEAGDVHVDEHEDRGSSIDDDSRTYLLYFTETRRKLENRHVQLIAISGVIGTALFVAIGKALYRGGPASLLLAFALWCVPILCITVSTAEMVCFFPVSSPFLRLATKCVDDSLAVMASWNFWFLECVQIPFEIVSVNTIIHYWRDDYSAGIPLAVQVVLYLLISICAVKYYGEMEFWLASFKIILALGLFTFTFITMLGGNPEHDRYGFRNYGESPFKKYFPDGNDVGKSSGYFQGFLACLIQASFTIAGGEYISMLAGEVKRPRKVLPKAFKQVFVRLTFLFLGSCLCVGIVCSPNDPDLTAAINEARPGAGSSPYVIAMNNLKIRILPDIVNIALITAAFSAGNAYTYCSSRTFYGMALDGYAPKIFTRCNRHGVPIYSVAISLVWALVSLLQLNSNSAVVLNWLINLITASQLINFVVLCIVYLFFRRAYHVQQDSLPKLPFRSWGQPYTAIIGLVSCSAMILIQGYTVFFPKLWNTQDFLFSYLMVFINIGIYVGYKFIWKRGKDHFKNPHEIDFSKELTEIENHEIESSFEKFQYYSKA</sequence>